<comment type="sequence caution" evidence="2">
    <conflict type="erroneous initiation">
        <sequence resource="EMBL-CDS" id="BAB08887"/>
    </conflict>
    <text>Truncated N-terminus.</text>
</comment>
<organism>
    <name type="scientific">Arabidopsis thaliana</name>
    <name type="common">Mouse-ear cress</name>
    <dbReference type="NCBI Taxonomy" id="3702"/>
    <lineage>
        <taxon>Eukaryota</taxon>
        <taxon>Viridiplantae</taxon>
        <taxon>Streptophyta</taxon>
        <taxon>Embryophyta</taxon>
        <taxon>Tracheophyta</taxon>
        <taxon>Spermatophyta</taxon>
        <taxon>Magnoliopsida</taxon>
        <taxon>eudicotyledons</taxon>
        <taxon>Gunneridae</taxon>
        <taxon>Pentapetalae</taxon>
        <taxon>rosids</taxon>
        <taxon>malvids</taxon>
        <taxon>Brassicales</taxon>
        <taxon>Brassicaceae</taxon>
        <taxon>Camelineae</taxon>
        <taxon>Arabidopsis</taxon>
    </lineage>
</organism>
<protein>
    <recommendedName>
        <fullName>F-box/kelch-repeat protein At5g39560</fullName>
    </recommendedName>
</protein>
<gene>
    <name type="ordered locus">At5g39560</name>
    <name type="ORF">MIJ24.5</name>
</gene>
<name>FK131_ARATH</name>
<sequence length="403" mass="46446">MLLPFPATMISEVEQPKEKRSLSSEPPSLMSLPYEIIENILARISKWSYPNLSLVSKSFLSLLSSPQLYKTRSEIGTTEPCLYFCLESANHSSPQWYTLWMKPDETLTGTGTIHDYSLIPLPSSSPVLRTSTVAVGSEIYVIGGHFNRSSSVRIFDCRSNTWRDGPNMTVARSDPVAVLIDQRIYVLGGREMDESDDWFEVFDIKTQTWRALPSFRAGLELRRYIVWPNRYFPRLGDSQTAVRLINVNPNALEGKLYVAAQINDYTYEPKDDTWKVVSKSSIRRVKVWCVIENVMYACHDVFLRWYDYEDRRWREIQGLEELCYHPTRGFSGAERIVNYGGKLVVMWRPVQSDGKDKIEIWCAQIALEKRSKDEIWGKIEWINSVLTVPKLCDLCYSCVVVSI</sequence>
<keyword id="KW-0880">Kelch repeat</keyword>
<keyword id="KW-1185">Reference proteome</keyword>
<keyword id="KW-0677">Repeat</keyword>
<accession>Q6NL02</accession>
<accession>Q9FKA6</accession>
<feature type="chain" id="PRO_0000396073" description="F-box/kelch-repeat protein At5g39560">
    <location>
        <begin position="1"/>
        <end position="403"/>
    </location>
</feature>
<feature type="domain" description="F-box" evidence="1">
    <location>
        <begin position="26"/>
        <end position="72"/>
    </location>
</feature>
<feature type="repeat" description="Kelch 1">
    <location>
        <begin position="138"/>
        <end position="182"/>
    </location>
</feature>
<feature type="repeat" description="Kelch 2">
    <location>
        <begin position="184"/>
        <end position="229"/>
    </location>
</feature>
<feature type="repeat" description="Kelch 3">
    <location>
        <begin position="248"/>
        <end position="294"/>
    </location>
</feature>
<feature type="repeat" description="Kelch 4">
    <location>
        <begin position="296"/>
        <end position="340"/>
    </location>
</feature>
<reference key="1">
    <citation type="journal article" date="1998" name="DNA Res.">
        <title>Structural analysis of Arabidopsis thaliana chromosome 5. VI. Sequence features of the regions of 1,367,185 bp covered by 19 physically assigned P1 and TAC clones.</title>
        <authorList>
            <person name="Kotani H."/>
            <person name="Nakamura Y."/>
            <person name="Sato S."/>
            <person name="Asamizu E."/>
            <person name="Kaneko T."/>
            <person name="Miyajima N."/>
            <person name="Tabata S."/>
        </authorList>
    </citation>
    <scope>NUCLEOTIDE SEQUENCE [LARGE SCALE GENOMIC DNA]</scope>
    <source>
        <strain>cv. Columbia</strain>
    </source>
</reference>
<reference key="2">
    <citation type="journal article" date="2017" name="Plant J.">
        <title>Araport11: a complete reannotation of the Arabidopsis thaliana reference genome.</title>
        <authorList>
            <person name="Cheng C.Y."/>
            <person name="Krishnakumar V."/>
            <person name="Chan A.P."/>
            <person name="Thibaud-Nissen F."/>
            <person name="Schobel S."/>
            <person name="Town C.D."/>
        </authorList>
    </citation>
    <scope>GENOME REANNOTATION</scope>
    <source>
        <strain>cv. Columbia</strain>
    </source>
</reference>
<reference key="3">
    <citation type="submission" date="2004-04" db="EMBL/GenBank/DDBJ databases">
        <title>Arabidopsis ORF clones.</title>
        <authorList>
            <person name="Cheuk R.F."/>
            <person name="Chen H."/>
            <person name="Kim C.J."/>
            <person name="Shinn P."/>
            <person name="Ecker J.R."/>
        </authorList>
    </citation>
    <scope>NUCLEOTIDE SEQUENCE [LARGE SCALE MRNA]</scope>
    <source>
        <strain>cv. Columbia</strain>
    </source>
</reference>
<dbReference type="EMBL" id="AB012243">
    <property type="protein sequence ID" value="BAB08887.1"/>
    <property type="status" value="ALT_INIT"/>
    <property type="molecule type" value="Genomic_DNA"/>
</dbReference>
<dbReference type="EMBL" id="CP002688">
    <property type="protein sequence ID" value="AED94447.1"/>
    <property type="molecule type" value="Genomic_DNA"/>
</dbReference>
<dbReference type="EMBL" id="BT011234">
    <property type="protein sequence ID" value="AAR92270.1"/>
    <property type="molecule type" value="mRNA"/>
</dbReference>
<dbReference type="EMBL" id="BT012541">
    <property type="protein sequence ID" value="AAS99685.1"/>
    <property type="molecule type" value="mRNA"/>
</dbReference>
<dbReference type="RefSeq" id="NP_198772.2">
    <property type="nucleotide sequence ID" value="NM_123318.3"/>
</dbReference>
<dbReference type="SMR" id="Q6NL02"/>
<dbReference type="STRING" id="3702.Q6NL02"/>
<dbReference type="iPTMnet" id="Q6NL02"/>
<dbReference type="PaxDb" id="3702-AT5G39560.1"/>
<dbReference type="ProteomicsDB" id="230424"/>
<dbReference type="EnsemblPlants" id="AT5G39560.1">
    <property type="protein sequence ID" value="AT5G39560.1"/>
    <property type="gene ID" value="AT5G39560"/>
</dbReference>
<dbReference type="GeneID" id="833952"/>
<dbReference type="Gramene" id="AT5G39560.1">
    <property type="protein sequence ID" value="AT5G39560.1"/>
    <property type="gene ID" value="AT5G39560"/>
</dbReference>
<dbReference type="KEGG" id="ath:AT5G39560"/>
<dbReference type="Araport" id="AT5G39560"/>
<dbReference type="TAIR" id="AT5G39560"/>
<dbReference type="eggNOG" id="KOG1072">
    <property type="taxonomic scope" value="Eukaryota"/>
</dbReference>
<dbReference type="HOGENOM" id="CLU_032521_1_2_1"/>
<dbReference type="InParanoid" id="Q6NL02"/>
<dbReference type="OMA" id="KLVVMWR"/>
<dbReference type="PhylomeDB" id="Q6NL02"/>
<dbReference type="PRO" id="PR:Q6NL02"/>
<dbReference type="Proteomes" id="UP000006548">
    <property type="component" value="Chromosome 5"/>
</dbReference>
<dbReference type="ExpressionAtlas" id="Q6NL02">
    <property type="expression patterns" value="baseline and differential"/>
</dbReference>
<dbReference type="GO" id="GO:0009507">
    <property type="term" value="C:chloroplast"/>
    <property type="evidence" value="ECO:0007005"/>
    <property type="project" value="TAIR"/>
</dbReference>
<dbReference type="FunFam" id="2.120.10.80:FF:000210">
    <property type="entry name" value="F-box/kelch-repeat protein At4g19330"/>
    <property type="match status" value="1"/>
</dbReference>
<dbReference type="Gene3D" id="2.120.10.80">
    <property type="entry name" value="Kelch-type beta propeller"/>
    <property type="match status" value="1"/>
</dbReference>
<dbReference type="InterPro" id="IPR036047">
    <property type="entry name" value="F-box-like_dom_sf"/>
</dbReference>
<dbReference type="InterPro" id="IPR050354">
    <property type="entry name" value="F-box/kelch-repeat_ARATH"/>
</dbReference>
<dbReference type="InterPro" id="IPR001810">
    <property type="entry name" value="F-box_dom"/>
</dbReference>
<dbReference type="InterPro" id="IPR015915">
    <property type="entry name" value="Kelch-typ_b-propeller"/>
</dbReference>
<dbReference type="InterPro" id="IPR006652">
    <property type="entry name" value="Kelch_1"/>
</dbReference>
<dbReference type="PANTHER" id="PTHR24414:SF138">
    <property type="entry name" value="F-BOX DOMAIN-CONTAINING PROTEIN"/>
    <property type="match status" value="1"/>
</dbReference>
<dbReference type="PANTHER" id="PTHR24414">
    <property type="entry name" value="F-BOX/KELCH-REPEAT PROTEIN SKIP4"/>
    <property type="match status" value="1"/>
</dbReference>
<dbReference type="Pfam" id="PF00646">
    <property type="entry name" value="F-box"/>
    <property type="match status" value="1"/>
</dbReference>
<dbReference type="Pfam" id="PF25210">
    <property type="entry name" value="Kelch_FKB95"/>
    <property type="match status" value="1"/>
</dbReference>
<dbReference type="SMART" id="SM00256">
    <property type="entry name" value="FBOX"/>
    <property type="match status" value="1"/>
</dbReference>
<dbReference type="SMART" id="SM00612">
    <property type="entry name" value="Kelch"/>
    <property type="match status" value="2"/>
</dbReference>
<dbReference type="SUPFAM" id="SSF81383">
    <property type="entry name" value="F-box domain"/>
    <property type="match status" value="1"/>
</dbReference>
<dbReference type="SUPFAM" id="SSF117281">
    <property type="entry name" value="Kelch motif"/>
    <property type="match status" value="1"/>
</dbReference>
<dbReference type="PROSITE" id="PS50181">
    <property type="entry name" value="FBOX"/>
    <property type="match status" value="1"/>
</dbReference>
<evidence type="ECO:0000255" key="1">
    <source>
        <dbReference type="PROSITE-ProRule" id="PRU00080"/>
    </source>
</evidence>
<evidence type="ECO:0000305" key="2"/>
<proteinExistence type="evidence at transcript level"/>